<dbReference type="EC" id="7.1.1.-"/>
<dbReference type="EMBL" id="EF489041">
    <property type="protein sequence ID" value="ABO36759.1"/>
    <property type="molecule type" value="Genomic_DNA"/>
</dbReference>
<dbReference type="RefSeq" id="YP_001109555.1">
    <property type="nucleotide sequence ID" value="NC_009143.1"/>
</dbReference>
<dbReference type="SMR" id="A4GYW4"/>
<dbReference type="FunCoup" id="A4GYW4">
    <property type="interactions" value="6"/>
</dbReference>
<dbReference type="STRING" id="3694.A4GYW4"/>
<dbReference type="GeneID" id="4929737"/>
<dbReference type="KEGG" id="pop:4929737"/>
<dbReference type="InParanoid" id="A4GYW4"/>
<dbReference type="OrthoDB" id="831889at2759"/>
<dbReference type="Proteomes" id="UP000006729">
    <property type="component" value="Chloroplast"/>
</dbReference>
<dbReference type="ExpressionAtlas" id="A4GYW4">
    <property type="expression patterns" value="baseline and differential"/>
</dbReference>
<dbReference type="GO" id="GO:0009535">
    <property type="term" value="C:chloroplast thylakoid membrane"/>
    <property type="evidence" value="ECO:0007669"/>
    <property type="project" value="UniProtKB-SubCell"/>
</dbReference>
<dbReference type="GO" id="GO:0008137">
    <property type="term" value="F:NADH dehydrogenase (ubiquinone) activity"/>
    <property type="evidence" value="ECO:0007669"/>
    <property type="project" value="InterPro"/>
</dbReference>
<dbReference type="GO" id="GO:0048038">
    <property type="term" value="F:quinone binding"/>
    <property type="evidence" value="ECO:0007669"/>
    <property type="project" value="UniProtKB-KW"/>
</dbReference>
<dbReference type="GO" id="GO:0042773">
    <property type="term" value="P:ATP synthesis coupled electron transport"/>
    <property type="evidence" value="ECO:0007669"/>
    <property type="project" value="InterPro"/>
</dbReference>
<dbReference type="GO" id="GO:0015990">
    <property type="term" value="P:electron transport coupled proton transport"/>
    <property type="evidence" value="ECO:0000318"/>
    <property type="project" value="GO_Central"/>
</dbReference>
<dbReference type="Gene3D" id="1.20.5.2700">
    <property type="match status" value="1"/>
</dbReference>
<dbReference type="InterPro" id="IPR002128">
    <property type="entry name" value="NADH_UbQ_OxRdtase_chlpt_su5_C"/>
</dbReference>
<dbReference type="InterPro" id="IPR018393">
    <property type="entry name" value="NADHpl_OxRdtase_5_subgr"/>
</dbReference>
<dbReference type="InterPro" id="IPR001750">
    <property type="entry name" value="ND/Mrp_TM"/>
</dbReference>
<dbReference type="InterPro" id="IPR003945">
    <property type="entry name" value="NU5C-like"/>
</dbReference>
<dbReference type="InterPro" id="IPR001516">
    <property type="entry name" value="Proton_antipo_N"/>
</dbReference>
<dbReference type="NCBIfam" id="TIGR01974">
    <property type="entry name" value="NDH_I_L"/>
    <property type="match status" value="1"/>
</dbReference>
<dbReference type="NCBIfam" id="NF005141">
    <property type="entry name" value="PRK06590.1"/>
    <property type="match status" value="1"/>
</dbReference>
<dbReference type="PANTHER" id="PTHR42829">
    <property type="entry name" value="NADH-UBIQUINONE OXIDOREDUCTASE CHAIN 5"/>
    <property type="match status" value="1"/>
</dbReference>
<dbReference type="PANTHER" id="PTHR42829:SF2">
    <property type="entry name" value="NADH-UBIQUINONE OXIDOREDUCTASE CHAIN 5"/>
    <property type="match status" value="1"/>
</dbReference>
<dbReference type="Pfam" id="PF01010">
    <property type="entry name" value="Proton_antipo_C"/>
    <property type="match status" value="1"/>
</dbReference>
<dbReference type="Pfam" id="PF00361">
    <property type="entry name" value="Proton_antipo_M"/>
    <property type="match status" value="1"/>
</dbReference>
<dbReference type="Pfam" id="PF00662">
    <property type="entry name" value="Proton_antipo_N"/>
    <property type="match status" value="1"/>
</dbReference>
<dbReference type="PRINTS" id="PR01434">
    <property type="entry name" value="NADHDHGNASE5"/>
</dbReference>
<dbReference type="PRINTS" id="PR01435">
    <property type="entry name" value="NPOXDRDTASE5"/>
</dbReference>
<geneLocation type="chloroplast"/>
<evidence type="ECO:0000250" key="1"/>
<evidence type="ECO:0000255" key="2"/>
<evidence type="ECO:0000305" key="3"/>
<protein>
    <recommendedName>
        <fullName>NAD(P)H-quinone oxidoreductase subunit 5, chloroplastic</fullName>
        <ecNumber>7.1.1.-</ecNumber>
    </recommendedName>
    <alternativeName>
        <fullName>NAD(P)H dehydrogenase subunit 5</fullName>
    </alternativeName>
    <alternativeName>
        <fullName>NADH-plastoquinone oxidoreductase subunit 5</fullName>
    </alternativeName>
</protein>
<comment type="function">
    <text evidence="1">NDH shuttles electrons from NAD(P)H:plastoquinone, via FMN and iron-sulfur (Fe-S) centers, to quinones in the photosynthetic chain and possibly in a chloroplast respiratory chain. The immediate electron acceptor for the enzyme in this species is believed to be plastoquinone. Couples the redox reaction to proton translocation, and thus conserves the redox energy in a proton gradient (By similarity).</text>
</comment>
<comment type="catalytic activity">
    <reaction>
        <text>a plastoquinone + NADH + (n+1) H(+)(in) = a plastoquinol + NAD(+) + n H(+)(out)</text>
        <dbReference type="Rhea" id="RHEA:42608"/>
        <dbReference type="Rhea" id="RHEA-COMP:9561"/>
        <dbReference type="Rhea" id="RHEA-COMP:9562"/>
        <dbReference type="ChEBI" id="CHEBI:15378"/>
        <dbReference type="ChEBI" id="CHEBI:17757"/>
        <dbReference type="ChEBI" id="CHEBI:57540"/>
        <dbReference type="ChEBI" id="CHEBI:57945"/>
        <dbReference type="ChEBI" id="CHEBI:62192"/>
    </reaction>
</comment>
<comment type="catalytic activity">
    <reaction>
        <text>a plastoquinone + NADPH + (n+1) H(+)(in) = a plastoquinol + NADP(+) + n H(+)(out)</text>
        <dbReference type="Rhea" id="RHEA:42612"/>
        <dbReference type="Rhea" id="RHEA-COMP:9561"/>
        <dbReference type="Rhea" id="RHEA-COMP:9562"/>
        <dbReference type="ChEBI" id="CHEBI:15378"/>
        <dbReference type="ChEBI" id="CHEBI:17757"/>
        <dbReference type="ChEBI" id="CHEBI:57783"/>
        <dbReference type="ChEBI" id="CHEBI:58349"/>
        <dbReference type="ChEBI" id="CHEBI:62192"/>
    </reaction>
</comment>
<comment type="subunit">
    <text evidence="1">NDH is composed of at least 16 different subunits, 5 of which are encoded in the nucleus.</text>
</comment>
<comment type="subcellular location">
    <subcellularLocation>
        <location evidence="1">Plastid</location>
        <location evidence="1">Chloroplast thylakoid membrane</location>
        <topology evidence="1">Multi-pass membrane protein</topology>
    </subcellularLocation>
</comment>
<comment type="similarity">
    <text evidence="3">Belongs to the complex I subunit 5 family.</text>
</comment>
<keyword id="KW-0150">Chloroplast</keyword>
<keyword id="KW-0472">Membrane</keyword>
<keyword id="KW-0520">NAD</keyword>
<keyword id="KW-0521">NADP</keyword>
<keyword id="KW-0934">Plastid</keyword>
<keyword id="KW-0618">Plastoquinone</keyword>
<keyword id="KW-0874">Quinone</keyword>
<keyword id="KW-1185">Reference proteome</keyword>
<keyword id="KW-0793">Thylakoid</keyword>
<keyword id="KW-1278">Translocase</keyword>
<keyword id="KW-0812">Transmembrane</keyword>
<keyword id="KW-1133">Transmembrane helix</keyword>
<keyword id="KW-0813">Transport</keyword>
<organism>
    <name type="scientific">Populus trichocarpa</name>
    <name type="common">Western balsam poplar</name>
    <name type="synonym">Populus balsamifera subsp. trichocarpa</name>
    <dbReference type="NCBI Taxonomy" id="3694"/>
    <lineage>
        <taxon>Eukaryota</taxon>
        <taxon>Viridiplantae</taxon>
        <taxon>Streptophyta</taxon>
        <taxon>Embryophyta</taxon>
        <taxon>Tracheophyta</taxon>
        <taxon>Spermatophyta</taxon>
        <taxon>Magnoliopsida</taxon>
        <taxon>eudicotyledons</taxon>
        <taxon>Gunneridae</taxon>
        <taxon>Pentapetalae</taxon>
        <taxon>rosids</taxon>
        <taxon>fabids</taxon>
        <taxon>Malpighiales</taxon>
        <taxon>Salicaceae</taxon>
        <taxon>Saliceae</taxon>
        <taxon>Populus</taxon>
    </lineage>
</organism>
<sequence>MEHTYQYLWIISFVTLPVPMLIGMGLLLFPVSTKKLHRIWAFPSVLLLSIVMVFSIDLFIQQINSSSIYQYVWSWTINNDFSLEFGYLIDPLTSILLILITTVGILVLVYSDSYMSHDQGYLRFFVYMSFFNTSMLGLVTSSNLIQIYIFWELVGMCSYLLIGFWFTRPIVSNACQKAFVTNRVGDFGLLLGILGLYWITGSFEFQDLFEIFNNLIYNNDNEVHFLFVTLCAFLLFSGAIAKSAQFPLHVWLPDAMEGPTPISALIHAATMVAAGIFLVARLLPLFVVIPYIMKLIALIGIITVLLGATLAFAQKDIKRGLAYSTMSQLGYTMLALGMGSYRAALFHLITHAYSKALLFLGSGSIIHSMEVIVGYSPDKSQNMVLMGGLTKHVPITKIAFLLGTLSLCGIPPLACFWSKDEILNDSWSYSPIFAIIAFSTAGLTAFYMFRVYLLTFEGHLNIYFQNYSGKKNSAFYSISLWGKQGSKILKKKMRLLPLLTINNKNNNERASFFCFFWKKIYQTGGTVRKMTCPFITINHFGTKRIFSYPQESDNTILFPMLVLVLFTLFIGAIGIPFNQFNQEEMNFDILSKLLIPSLSLLHQNQNKSVDWYEFVTNSTFSVSIASFGIFIASSLYKPIYSSLQNLKFLNLVAKKGPKRILRDKIINVIYDWSYNRGYIDVFYAISLTEGIRRLAELTSFFDRRVIDGITNGVGFTSFFAGEGIKYVGGGRISFYLLLYLFYVLIFLLISSSIFSSFSSL</sequence>
<proteinExistence type="inferred from homology"/>
<reference key="1">
    <citation type="journal article" date="2006" name="Science">
        <title>The genome of black cottonwood, Populus trichocarpa (Torr. &amp; Gray).</title>
        <authorList>
            <person name="Tuskan G.A."/>
            <person name="Difazio S."/>
            <person name="Jansson S."/>
            <person name="Bohlmann J."/>
            <person name="Grigoriev I."/>
            <person name="Hellsten U."/>
            <person name="Putnam N."/>
            <person name="Ralph S."/>
            <person name="Rombauts S."/>
            <person name="Salamov A."/>
            <person name="Schein J."/>
            <person name="Sterck L."/>
            <person name="Aerts A."/>
            <person name="Bhalerao R.R."/>
            <person name="Bhalerao R.P."/>
            <person name="Blaudez D."/>
            <person name="Boerjan W."/>
            <person name="Brun A."/>
            <person name="Brunner A."/>
            <person name="Busov V."/>
            <person name="Campbell M."/>
            <person name="Carlson J."/>
            <person name="Chalot M."/>
            <person name="Chapman J."/>
            <person name="Chen G.-L."/>
            <person name="Cooper D."/>
            <person name="Coutinho P.M."/>
            <person name="Couturier J."/>
            <person name="Covert S."/>
            <person name="Cronk Q."/>
            <person name="Cunningham R."/>
            <person name="Davis J."/>
            <person name="Degroeve S."/>
            <person name="Dejardin A."/>
            <person name="dePamphilis C.W."/>
            <person name="Detter J."/>
            <person name="Dirks B."/>
            <person name="Dubchak I."/>
            <person name="Duplessis S."/>
            <person name="Ehlting J."/>
            <person name="Ellis B."/>
            <person name="Gendler K."/>
            <person name="Goodstein D."/>
            <person name="Gribskov M."/>
            <person name="Grimwood J."/>
            <person name="Groover A."/>
            <person name="Gunter L."/>
            <person name="Hamberger B."/>
            <person name="Heinze B."/>
            <person name="Helariutta Y."/>
            <person name="Henrissat B."/>
            <person name="Holligan D."/>
            <person name="Holt R."/>
            <person name="Huang W."/>
            <person name="Islam-Faridi N."/>
            <person name="Jones S."/>
            <person name="Jones-Rhoades M."/>
            <person name="Jorgensen R."/>
            <person name="Joshi C."/>
            <person name="Kangasjaervi J."/>
            <person name="Karlsson J."/>
            <person name="Kelleher C."/>
            <person name="Kirkpatrick R."/>
            <person name="Kirst M."/>
            <person name="Kohler A."/>
            <person name="Kalluri U."/>
            <person name="Larimer F."/>
            <person name="Leebens-Mack J."/>
            <person name="Leple J.-C."/>
            <person name="Locascio P."/>
            <person name="Lou Y."/>
            <person name="Lucas S."/>
            <person name="Martin F."/>
            <person name="Montanini B."/>
            <person name="Napoli C."/>
            <person name="Nelson D.R."/>
            <person name="Nelson C."/>
            <person name="Nieminen K."/>
            <person name="Nilsson O."/>
            <person name="Pereda V."/>
            <person name="Peter G."/>
            <person name="Philippe R."/>
            <person name="Pilate G."/>
            <person name="Poliakov A."/>
            <person name="Razumovskaya J."/>
            <person name="Richardson P."/>
            <person name="Rinaldi C."/>
            <person name="Ritland K."/>
            <person name="Rouze P."/>
            <person name="Ryaboy D."/>
            <person name="Schmutz J."/>
            <person name="Schrader J."/>
            <person name="Segerman B."/>
            <person name="Shin H."/>
            <person name="Siddiqui A."/>
            <person name="Sterky F."/>
            <person name="Terry A."/>
            <person name="Tsai C.-J."/>
            <person name="Uberbacher E."/>
            <person name="Unneberg P."/>
            <person name="Vahala J."/>
            <person name="Wall K."/>
            <person name="Wessler S."/>
            <person name="Yang G."/>
            <person name="Yin T."/>
            <person name="Douglas C."/>
            <person name="Marra M."/>
            <person name="Sandberg G."/>
            <person name="Van de Peer Y."/>
            <person name="Rokhsar D.S."/>
        </authorList>
    </citation>
    <scope>NUCLEOTIDE SEQUENCE [LARGE SCALE GENOMIC DNA]</scope>
    <source>
        <strain>cv. Nisqually</strain>
    </source>
</reference>
<gene>
    <name type="primary">ndhF</name>
    <name type="ordered locus">Poptr_cp077</name>
</gene>
<name>NU5C_POPTR</name>
<feature type="chain" id="PRO_0000360969" description="NAD(P)H-quinone oxidoreductase subunit 5, chloroplastic">
    <location>
        <begin position="1"/>
        <end position="760"/>
    </location>
</feature>
<feature type="transmembrane region" description="Helical" evidence="2">
    <location>
        <begin position="9"/>
        <end position="29"/>
    </location>
</feature>
<feature type="transmembrane region" description="Helical" evidence="2">
    <location>
        <begin position="39"/>
        <end position="59"/>
    </location>
</feature>
<feature type="transmembrane region" description="Helical" evidence="2">
    <location>
        <begin position="89"/>
        <end position="109"/>
    </location>
</feature>
<feature type="transmembrane region" description="Helical" evidence="2">
    <location>
        <begin position="125"/>
        <end position="145"/>
    </location>
</feature>
<feature type="transmembrane region" description="Helical" evidence="2">
    <location>
        <begin position="147"/>
        <end position="167"/>
    </location>
</feature>
<feature type="transmembrane region" description="Helical" evidence="2">
    <location>
        <begin position="185"/>
        <end position="205"/>
    </location>
</feature>
<feature type="transmembrane region" description="Helical" evidence="2">
    <location>
        <begin position="221"/>
        <end position="241"/>
    </location>
</feature>
<feature type="transmembrane region" description="Helical" evidence="2">
    <location>
        <begin position="260"/>
        <end position="280"/>
    </location>
</feature>
<feature type="transmembrane region" description="Helical" evidence="2">
    <location>
        <begin position="282"/>
        <end position="302"/>
    </location>
</feature>
<feature type="transmembrane region" description="Helical" evidence="2">
    <location>
        <begin position="329"/>
        <end position="349"/>
    </location>
</feature>
<feature type="transmembrane region" description="Helical" evidence="2">
    <location>
        <begin position="356"/>
        <end position="376"/>
    </location>
</feature>
<feature type="transmembrane region" description="Helical" evidence="2">
    <location>
        <begin position="398"/>
        <end position="418"/>
    </location>
</feature>
<feature type="transmembrane region" description="Helical" evidence="2">
    <location>
        <begin position="429"/>
        <end position="449"/>
    </location>
</feature>
<feature type="transmembrane region" description="Helical" evidence="2">
    <location>
        <begin position="556"/>
        <end position="576"/>
    </location>
</feature>
<feature type="transmembrane region" description="Helical" evidence="2">
    <location>
        <begin position="620"/>
        <end position="640"/>
    </location>
</feature>
<feature type="transmembrane region" description="Helical" evidence="2">
    <location>
        <begin position="734"/>
        <end position="754"/>
    </location>
</feature>
<accession>A4GYW4</accession>